<evidence type="ECO:0000250" key="1"/>
<evidence type="ECO:0000305" key="2"/>
<comment type="function">
    <text evidence="1">Allophycocyanin is a photosynthetic bile pigment-protein complex with maximum absorption at approximately 650 nanometers.</text>
</comment>
<comment type="subcellular location">
    <subcellularLocation>
        <location evidence="1">Plastid</location>
        <location evidence="1">Chloroplast thylakoid membrane</location>
        <topology evidence="1">Peripheral membrane protein</topology>
        <orientation evidence="1">Stromal side</orientation>
    </subcellularLocation>
    <text evidence="1">Forms the core of the phycobilisome.</text>
</comment>
<comment type="PTM">
    <text evidence="1">Contains one covalently linked bilin chromophore.</text>
</comment>
<comment type="similarity">
    <text evidence="2">Belongs to the phycobiliprotein family.</text>
</comment>
<name>APCD_PORPU</name>
<protein>
    <recommendedName>
        <fullName>Allophycocyanin alpha-B chain</fullName>
    </recommendedName>
    <alternativeName>
        <fullName>Allophycocyanin gamma chain</fullName>
    </alternativeName>
</protein>
<organism>
    <name type="scientific">Porphyra purpurea</name>
    <name type="common">Red seaweed</name>
    <name type="synonym">Ulva purpurea</name>
    <dbReference type="NCBI Taxonomy" id="2787"/>
    <lineage>
        <taxon>Eukaryota</taxon>
        <taxon>Rhodophyta</taxon>
        <taxon>Bangiophyceae</taxon>
        <taxon>Bangiales</taxon>
        <taxon>Bangiaceae</taxon>
        <taxon>Porphyra</taxon>
    </lineage>
</organism>
<sequence length="161" mass="18044">MSLVSQIIINADDELRYPTIGELQSIQNYLITGSNRIRIATIIRDKEKEIIQKASKQIFQLHPEYIAPGGNAAGSRKRSLCLRDYGWYLRLITYGVLAGDKDSIETIGIIGVREMYNSLGVPIIGMLDAIQCLKEASLEMLGQDDAKIISPYFDYIIRGMS</sequence>
<reference key="1">
    <citation type="journal article" date="1995" name="Plant Mol. Biol. Rep.">
        <title>Complete nucleotide sequence of the Porphyra purpurea chloroplast genome.</title>
        <authorList>
            <person name="Reith M.E."/>
            <person name="Munholland J."/>
        </authorList>
    </citation>
    <scope>NUCLEOTIDE SEQUENCE [LARGE SCALE GENOMIC DNA]</scope>
    <source>
        <strain>Avonport</strain>
    </source>
</reference>
<accession>P51195</accession>
<geneLocation type="chloroplast"/>
<proteinExistence type="inferred from homology"/>
<dbReference type="EMBL" id="U38804">
    <property type="protein sequence ID" value="AAC08081.1"/>
    <property type="molecule type" value="Genomic_DNA"/>
</dbReference>
<dbReference type="PIR" id="S73116">
    <property type="entry name" value="S73116"/>
</dbReference>
<dbReference type="RefSeq" id="NP_053805.1">
    <property type="nucleotide sequence ID" value="NC_000925.1"/>
</dbReference>
<dbReference type="SMR" id="P51195"/>
<dbReference type="GeneID" id="809819"/>
<dbReference type="GO" id="GO:0009535">
    <property type="term" value="C:chloroplast thylakoid membrane"/>
    <property type="evidence" value="ECO:0007669"/>
    <property type="project" value="UniProtKB-SubCell"/>
</dbReference>
<dbReference type="GO" id="GO:0030089">
    <property type="term" value="C:phycobilisome"/>
    <property type="evidence" value="ECO:0007669"/>
    <property type="project" value="UniProtKB-KW"/>
</dbReference>
<dbReference type="GO" id="GO:0015979">
    <property type="term" value="P:photosynthesis"/>
    <property type="evidence" value="ECO:0007669"/>
    <property type="project" value="UniProtKB-KW"/>
</dbReference>
<dbReference type="CDD" id="cd12125">
    <property type="entry name" value="APC_alpha"/>
    <property type="match status" value="1"/>
</dbReference>
<dbReference type="Gene3D" id="1.10.490.20">
    <property type="entry name" value="Phycocyanins"/>
    <property type="match status" value="1"/>
</dbReference>
<dbReference type="InterPro" id="IPR009050">
    <property type="entry name" value="Globin-like_sf"/>
</dbReference>
<dbReference type="InterPro" id="IPR012128">
    <property type="entry name" value="Phycobilisome_asu/bsu"/>
</dbReference>
<dbReference type="InterPro" id="IPR038719">
    <property type="entry name" value="Phycobilisome_asu/bsu_sf"/>
</dbReference>
<dbReference type="PANTHER" id="PTHR34011:SF2">
    <property type="entry name" value="ALLOPHYCOCYANIN ALPHA CHAIN"/>
    <property type="match status" value="1"/>
</dbReference>
<dbReference type="PANTHER" id="PTHR34011">
    <property type="entry name" value="PHYCOBILISOME 32.1 KDA LINKER POLYPEPTIDE, PHYCOCYANIN-ASSOCIATED, ROD 2-RELATED"/>
    <property type="match status" value="1"/>
</dbReference>
<dbReference type="Pfam" id="PF00502">
    <property type="entry name" value="Phycobilisome"/>
    <property type="match status" value="1"/>
</dbReference>
<dbReference type="PIRSF" id="PIRSF000081">
    <property type="entry name" value="Phycocyanin"/>
    <property type="match status" value="1"/>
</dbReference>
<dbReference type="SUPFAM" id="SSF46458">
    <property type="entry name" value="Globin-like"/>
    <property type="match status" value="1"/>
</dbReference>
<feature type="chain" id="PRO_0000199110" description="Allophycocyanin alpha-B chain">
    <location>
        <begin position="1"/>
        <end position="161"/>
    </location>
</feature>
<feature type="binding site" description="covalent" evidence="1">
    <location>
        <position position="81"/>
    </location>
    <ligand>
        <name>(2R,3E)-phycocyanobilin</name>
        <dbReference type="ChEBI" id="CHEBI:85275"/>
    </ligand>
</feature>
<feature type="modified residue" description="N4-methylasparagine" evidence="1">
    <location>
        <position position="71"/>
    </location>
</feature>
<gene>
    <name type="primary">apcD</name>
</gene>
<keyword id="KW-0042">Antenna complex</keyword>
<keyword id="KW-0089">Bile pigment</keyword>
<keyword id="KW-0150">Chloroplast</keyword>
<keyword id="KW-0157">Chromophore</keyword>
<keyword id="KW-0249">Electron transport</keyword>
<keyword id="KW-0472">Membrane</keyword>
<keyword id="KW-0488">Methylation</keyword>
<keyword id="KW-0602">Photosynthesis</keyword>
<keyword id="KW-0605">Phycobilisome</keyword>
<keyword id="KW-0934">Plastid</keyword>
<keyword id="KW-0793">Thylakoid</keyword>
<keyword id="KW-0813">Transport</keyword>